<reference key="1">
    <citation type="journal article" date="2005" name="Nucleic Acids Res.">
        <title>Genome dynamics and diversity of Shigella species, the etiologic agents of bacillary dysentery.</title>
        <authorList>
            <person name="Yang F."/>
            <person name="Yang J."/>
            <person name="Zhang X."/>
            <person name="Chen L."/>
            <person name="Jiang Y."/>
            <person name="Yan Y."/>
            <person name="Tang X."/>
            <person name="Wang J."/>
            <person name="Xiong Z."/>
            <person name="Dong J."/>
            <person name="Xue Y."/>
            <person name="Zhu Y."/>
            <person name="Xu X."/>
            <person name="Sun L."/>
            <person name="Chen S."/>
            <person name="Nie H."/>
            <person name="Peng J."/>
            <person name="Xu J."/>
            <person name="Wang Y."/>
            <person name="Yuan Z."/>
            <person name="Wen Y."/>
            <person name="Yao Z."/>
            <person name="Shen Y."/>
            <person name="Qiang B."/>
            <person name="Hou Y."/>
            <person name="Yu J."/>
            <person name="Jin Q."/>
        </authorList>
    </citation>
    <scope>NUCLEOTIDE SEQUENCE [LARGE SCALE GENOMIC DNA]</scope>
    <source>
        <strain>Ss046</strain>
    </source>
</reference>
<gene>
    <name evidence="1" type="primary">thrL</name>
    <name type="ordered locus">SSON_0001</name>
</gene>
<dbReference type="EMBL" id="CP000038">
    <property type="protein sequence ID" value="AAZ86799.1"/>
    <property type="molecule type" value="Genomic_DNA"/>
</dbReference>
<dbReference type="RefSeq" id="WP_001386572.1">
    <property type="nucleotide sequence ID" value="NC_007384.1"/>
</dbReference>
<dbReference type="GeneID" id="93777441"/>
<dbReference type="KEGG" id="ssn:SSON_0001"/>
<dbReference type="HOGENOM" id="CLU_221491_0_1_6"/>
<dbReference type="Proteomes" id="UP000002529">
    <property type="component" value="Chromosome"/>
</dbReference>
<dbReference type="GO" id="GO:0009088">
    <property type="term" value="P:threonine biosynthetic process"/>
    <property type="evidence" value="ECO:0007669"/>
    <property type="project" value="UniProtKB-UniRule"/>
</dbReference>
<dbReference type="GO" id="GO:0031556">
    <property type="term" value="P:transcriptional attenuation by ribosome"/>
    <property type="evidence" value="ECO:0007669"/>
    <property type="project" value="UniProtKB-UniRule"/>
</dbReference>
<dbReference type="HAMAP" id="MF_01907">
    <property type="entry name" value="Leader_Thr"/>
    <property type="match status" value="1"/>
</dbReference>
<dbReference type="InterPro" id="IPR011720">
    <property type="entry name" value="Thr_lead_pept"/>
</dbReference>
<dbReference type="NCBIfam" id="NF007329">
    <property type="entry name" value="PRK09816.1"/>
    <property type="match status" value="1"/>
</dbReference>
<dbReference type="NCBIfam" id="TIGR02077">
    <property type="entry name" value="thr_lead_pep"/>
    <property type="match status" value="1"/>
</dbReference>
<dbReference type="Pfam" id="PF08254">
    <property type="entry name" value="Leader_Thr"/>
    <property type="match status" value="1"/>
</dbReference>
<sequence length="21" mass="2138">MKRISTTITTTITITTGNGAG</sequence>
<keyword id="KW-0028">Amino-acid biosynthesis</keyword>
<keyword id="KW-0428">Leader peptide</keyword>
<keyword id="KW-1185">Reference proteome</keyword>
<keyword id="KW-0791">Threonine biosynthesis</keyword>
<proteinExistence type="inferred from homology"/>
<comment type="function">
    <text evidence="1">This protein is involved in control of the biosynthesis of threonine.</text>
</comment>
<comment type="similarity">
    <text evidence="1">Belongs to the thr operon leader peptide family.</text>
</comment>
<name>LPT_SHISS</name>
<organism>
    <name type="scientific">Shigella sonnei (strain Ss046)</name>
    <dbReference type="NCBI Taxonomy" id="300269"/>
    <lineage>
        <taxon>Bacteria</taxon>
        <taxon>Pseudomonadati</taxon>
        <taxon>Pseudomonadota</taxon>
        <taxon>Gammaproteobacteria</taxon>
        <taxon>Enterobacterales</taxon>
        <taxon>Enterobacteriaceae</taxon>
        <taxon>Shigella</taxon>
    </lineage>
</organism>
<feature type="peptide" id="PRO_0000312895" description="thr operon leader peptide">
    <location>
        <begin position="1"/>
        <end position="21"/>
    </location>
</feature>
<protein>
    <recommendedName>
        <fullName evidence="1">thr operon leader peptide</fullName>
    </recommendedName>
    <alternativeName>
        <fullName evidence="1">thr operon attenuator</fullName>
    </alternativeName>
</protein>
<accession>Q3Z613</accession>
<evidence type="ECO:0000255" key="1">
    <source>
        <dbReference type="HAMAP-Rule" id="MF_01907"/>
    </source>
</evidence>